<reference key="1">
    <citation type="journal article" date="2000" name="Nature">
        <title>DNA sequence of both chromosomes of the cholera pathogen Vibrio cholerae.</title>
        <authorList>
            <person name="Heidelberg J.F."/>
            <person name="Eisen J.A."/>
            <person name="Nelson W.C."/>
            <person name="Clayton R.A."/>
            <person name="Gwinn M.L."/>
            <person name="Dodson R.J."/>
            <person name="Haft D.H."/>
            <person name="Hickey E.K."/>
            <person name="Peterson J.D."/>
            <person name="Umayam L.A."/>
            <person name="Gill S.R."/>
            <person name="Nelson K.E."/>
            <person name="Read T.D."/>
            <person name="Tettelin H."/>
            <person name="Richardson D.L."/>
            <person name="Ermolaeva M.D."/>
            <person name="Vamathevan J.J."/>
            <person name="Bass S."/>
            <person name="Qin H."/>
            <person name="Dragoi I."/>
            <person name="Sellers P."/>
            <person name="McDonald L.A."/>
            <person name="Utterback T.R."/>
            <person name="Fleischmann R.D."/>
            <person name="Nierman W.C."/>
            <person name="White O."/>
            <person name="Salzberg S.L."/>
            <person name="Smith H.O."/>
            <person name="Colwell R.R."/>
            <person name="Mekalanos J.J."/>
            <person name="Venter J.C."/>
            <person name="Fraser C.M."/>
        </authorList>
    </citation>
    <scope>NUCLEOTIDE SEQUENCE [LARGE SCALE GENOMIC DNA]</scope>
    <source>
        <strain>ATCC 39315 / El Tor Inaba N16961</strain>
    </source>
</reference>
<sequence>MTAQTQELTKAQQYNFNKLQKRIRRNTGQAIADFNMIEDGDRIMVCLSGGKDSFTMLDILMSLQKSAPISFELVAVNLDQKQPGFPEHVLPEYLESLGVEYKIVEEDTYAIVQDKVPEGKTTCALCSRLRRGILYRTAKELGATKIALGHHRDDILETLFLNMFYGGKMKGMPPKLVSDNGEHVVIRPLAYCREKDIIKYSDMRGYPIIPCNLCGSQPNLQRQAVKQMLNDWDKRFPGRIETMFRAMQNVVPSHLADFSLFDFKSIDKNSGVINGGDIGFDKEEIAPQVVEDEDLVMEFDPSLQLNVTNI</sequence>
<evidence type="ECO:0000255" key="1">
    <source>
        <dbReference type="HAMAP-Rule" id="MF_01850"/>
    </source>
</evidence>
<keyword id="KW-0004">4Fe-4S</keyword>
<keyword id="KW-0067">ATP-binding</keyword>
<keyword id="KW-0963">Cytoplasm</keyword>
<keyword id="KW-0408">Iron</keyword>
<keyword id="KW-0411">Iron-sulfur</keyword>
<keyword id="KW-0460">Magnesium</keyword>
<keyword id="KW-0479">Metal-binding</keyword>
<keyword id="KW-0547">Nucleotide-binding</keyword>
<keyword id="KW-1185">Reference proteome</keyword>
<keyword id="KW-0694">RNA-binding</keyword>
<keyword id="KW-0808">Transferase</keyword>
<keyword id="KW-0819">tRNA processing</keyword>
<keyword id="KW-0820">tRNA-binding</keyword>
<feature type="chain" id="PRO_0000348861" description="tRNA-cytidine(32) 2-sulfurtransferase">
    <location>
        <begin position="1"/>
        <end position="310"/>
    </location>
</feature>
<feature type="short sequence motif" description="PP-loop motif" evidence="1">
    <location>
        <begin position="48"/>
        <end position="53"/>
    </location>
</feature>
<feature type="binding site" evidence="1">
    <location>
        <position position="123"/>
    </location>
    <ligand>
        <name>[4Fe-4S] cluster</name>
        <dbReference type="ChEBI" id="CHEBI:49883"/>
    </ligand>
</feature>
<feature type="binding site" evidence="1">
    <location>
        <position position="126"/>
    </location>
    <ligand>
        <name>[4Fe-4S] cluster</name>
        <dbReference type="ChEBI" id="CHEBI:49883"/>
    </ligand>
</feature>
<feature type="binding site" evidence="1">
    <location>
        <position position="214"/>
    </location>
    <ligand>
        <name>[4Fe-4S] cluster</name>
        <dbReference type="ChEBI" id="CHEBI:49883"/>
    </ligand>
</feature>
<gene>
    <name evidence="1" type="primary">ttcA</name>
    <name type="ordered locus">VC_1432</name>
</gene>
<proteinExistence type="inferred from homology"/>
<dbReference type="EC" id="2.8.1.-" evidence="1"/>
<dbReference type="EMBL" id="AE003852">
    <property type="protein sequence ID" value="AAF94589.1"/>
    <property type="molecule type" value="Genomic_DNA"/>
</dbReference>
<dbReference type="PIR" id="D82199">
    <property type="entry name" value="D82199"/>
</dbReference>
<dbReference type="RefSeq" id="NP_231075.1">
    <property type="nucleotide sequence ID" value="NC_002505.1"/>
</dbReference>
<dbReference type="RefSeq" id="WP_000126823.1">
    <property type="nucleotide sequence ID" value="NZ_LT906614.1"/>
</dbReference>
<dbReference type="SMR" id="Q9KS29"/>
<dbReference type="STRING" id="243277.VC_1432"/>
<dbReference type="DNASU" id="2614064"/>
<dbReference type="EnsemblBacteria" id="AAF94589">
    <property type="protein sequence ID" value="AAF94589"/>
    <property type="gene ID" value="VC_1432"/>
</dbReference>
<dbReference type="KEGG" id="vch:VC_1432"/>
<dbReference type="PATRIC" id="fig|243277.26.peg.1362"/>
<dbReference type="eggNOG" id="COG0037">
    <property type="taxonomic scope" value="Bacteria"/>
</dbReference>
<dbReference type="HOGENOM" id="CLU_026481_0_0_6"/>
<dbReference type="Proteomes" id="UP000000584">
    <property type="component" value="Chromosome 1"/>
</dbReference>
<dbReference type="GO" id="GO:0005829">
    <property type="term" value="C:cytosol"/>
    <property type="evidence" value="ECO:0000318"/>
    <property type="project" value="GO_Central"/>
</dbReference>
<dbReference type="GO" id="GO:0051539">
    <property type="term" value="F:4 iron, 4 sulfur cluster binding"/>
    <property type="evidence" value="ECO:0007669"/>
    <property type="project" value="UniProtKB-UniRule"/>
</dbReference>
<dbReference type="GO" id="GO:0005524">
    <property type="term" value="F:ATP binding"/>
    <property type="evidence" value="ECO:0007669"/>
    <property type="project" value="UniProtKB-UniRule"/>
</dbReference>
<dbReference type="GO" id="GO:0000287">
    <property type="term" value="F:magnesium ion binding"/>
    <property type="evidence" value="ECO:0007669"/>
    <property type="project" value="UniProtKB-UniRule"/>
</dbReference>
<dbReference type="GO" id="GO:0016783">
    <property type="term" value="F:sulfurtransferase activity"/>
    <property type="evidence" value="ECO:0000318"/>
    <property type="project" value="GO_Central"/>
</dbReference>
<dbReference type="GO" id="GO:0000049">
    <property type="term" value="F:tRNA binding"/>
    <property type="evidence" value="ECO:0007669"/>
    <property type="project" value="UniProtKB-KW"/>
</dbReference>
<dbReference type="GO" id="GO:0034227">
    <property type="term" value="P:tRNA thio-modification"/>
    <property type="evidence" value="ECO:0000318"/>
    <property type="project" value="GO_Central"/>
</dbReference>
<dbReference type="CDD" id="cd24138">
    <property type="entry name" value="TtcA-like"/>
    <property type="match status" value="1"/>
</dbReference>
<dbReference type="Gene3D" id="3.40.50.620">
    <property type="entry name" value="HUPs"/>
    <property type="match status" value="1"/>
</dbReference>
<dbReference type="HAMAP" id="MF_01850">
    <property type="entry name" value="TtcA"/>
    <property type="match status" value="1"/>
</dbReference>
<dbReference type="InterPro" id="IPR014729">
    <property type="entry name" value="Rossmann-like_a/b/a_fold"/>
</dbReference>
<dbReference type="InterPro" id="IPR011063">
    <property type="entry name" value="TilS/TtcA_N"/>
</dbReference>
<dbReference type="InterPro" id="IPR012089">
    <property type="entry name" value="tRNA_Cyd_32_2_STrfase"/>
</dbReference>
<dbReference type="InterPro" id="IPR035107">
    <property type="entry name" value="tRNA_thiolation_TtcA_Ctu1"/>
</dbReference>
<dbReference type="NCBIfam" id="NF007972">
    <property type="entry name" value="PRK10696.1"/>
    <property type="match status" value="1"/>
</dbReference>
<dbReference type="PANTHER" id="PTHR43686:SF1">
    <property type="entry name" value="AMINOTRAN_5 DOMAIN-CONTAINING PROTEIN"/>
    <property type="match status" value="1"/>
</dbReference>
<dbReference type="PANTHER" id="PTHR43686">
    <property type="entry name" value="SULFURTRANSFERASE-RELATED"/>
    <property type="match status" value="1"/>
</dbReference>
<dbReference type="Pfam" id="PF01171">
    <property type="entry name" value="ATP_bind_3"/>
    <property type="match status" value="1"/>
</dbReference>
<dbReference type="PIRSF" id="PIRSF004976">
    <property type="entry name" value="ATPase_YdaO"/>
    <property type="match status" value="1"/>
</dbReference>
<dbReference type="SUPFAM" id="SSF52402">
    <property type="entry name" value="Adenine nucleotide alpha hydrolases-like"/>
    <property type="match status" value="1"/>
</dbReference>
<organism>
    <name type="scientific">Vibrio cholerae serotype O1 (strain ATCC 39315 / El Tor Inaba N16961)</name>
    <dbReference type="NCBI Taxonomy" id="243277"/>
    <lineage>
        <taxon>Bacteria</taxon>
        <taxon>Pseudomonadati</taxon>
        <taxon>Pseudomonadota</taxon>
        <taxon>Gammaproteobacteria</taxon>
        <taxon>Vibrionales</taxon>
        <taxon>Vibrionaceae</taxon>
        <taxon>Vibrio</taxon>
    </lineage>
</organism>
<comment type="function">
    <text evidence="1">Catalyzes the ATP-dependent 2-thiolation of cytidine in position 32 of tRNA, to form 2-thiocytidine (s(2)C32). The sulfur atoms are provided by the cysteine/cysteine desulfurase (IscS) system.</text>
</comment>
<comment type="catalytic activity">
    <reaction evidence="1">
        <text>cytidine(32) in tRNA + S-sulfanyl-L-cysteinyl-[cysteine desulfurase] + AH2 + ATP = 2-thiocytidine(32) in tRNA + L-cysteinyl-[cysteine desulfurase] + A + AMP + diphosphate + H(+)</text>
        <dbReference type="Rhea" id="RHEA:57048"/>
        <dbReference type="Rhea" id="RHEA-COMP:10288"/>
        <dbReference type="Rhea" id="RHEA-COMP:12157"/>
        <dbReference type="Rhea" id="RHEA-COMP:12158"/>
        <dbReference type="Rhea" id="RHEA-COMP:14821"/>
        <dbReference type="ChEBI" id="CHEBI:13193"/>
        <dbReference type="ChEBI" id="CHEBI:15378"/>
        <dbReference type="ChEBI" id="CHEBI:17499"/>
        <dbReference type="ChEBI" id="CHEBI:29950"/>
        <dbReference type="ChEBI" id="CHEBI:30616"/>
        <dbReference type="ChEBI" id="CHEBI:33019"/>
        <dbReference type="ChEBI" id="CHEBI:61963"/>
        <dbReference type="ChEBI" id="CHEBI:82748"/>
        <dbReference type="ChEBI" id="CHEBI:141453"/>
        <dbReference type="ChEBI" id="CHEBI:456215"/>
    </reaction>
    <physiologicalReaction direction="left-to-right" evidence="1">
        <dbReference type="Rhea" id="RHEA:57049"/>
    </physiologicalReaction>
</comment>
<comment type="cofactor">
    <cofactor evidence="1">
        <name>Mg(2+)</name>
        <dbReference type="ChEBI" id="CHEBI:18420"/>
    </cofactor>
</comment>
<comment type="cofactor">
    <cofactor evidence="1">
        <name>[4Fe-4S] cluster</name>
        <dbReference type="ChEBI" id="CHEBI:49883"/>
    </cofactor>
    <text evidence="1">Binds 1 [4Fe-4S] cluster per subunit. The cluster is chelated by three Cys residues, the fourth Fe has a free coordination site that may bind a sulfur atom transferred from the persulfide of IscS.</text>
</comment>
<comment type="pathway">
    <text evidence="1">tRNA modification.</text>
</comment>
<comment type="subunit">
    <text evidence="1">Homodimer.</text>
</comment>
<comment type="subcellular location">
    <subcellularLocation>
        <location evidence="1">Cytoplasm</location>
    </subcellularLocation>
</comment>
<comment type="miscellaneous">
    <text evidence="1">The thiolation reaction likely consists of two steps: a first activation step by ATP to form an adenylated intermediate of the target base of tRNA, and a second nucleophilic substitution step of the sulfur (S) atom supplied by the hydrosulfide attached to the Fe-S cluster.</text>
</comment>
<comment type="similarity">
    <text evidence="1">Belongs to the TtcA family.</text>
</comment>
<accession>Q9KS29</accession>
<name>TTCA_VIBCH</name>
<protein>
    <recommendedName>
        <fullName evidence="1">tRNA-cytidine(32) 2-sulfurtransferase</fullName>
        <ecNumber evidence="1">2.8.1.-</ecNumber>
    </recommendedName>
    <alternativeName>
        <fullName evidence="1">Two-thiocytidine biosynthesis protein A</fullName>
    </alternativeName>
    <alternativeName>
        <fullName evidence="1">tRNA 2-thiocytidine biosynthesis protein TtcA</fullName>
    </alternativeName>
</protein>